<organism>
    <name type="scientific">Xenopus laevis</name>
    <name type="common">African clawed frog</name>
    <dbReference type="NCBI Taxonomy" id="8355"/>
    <lineage>
        <taxon>Eukaryota</taxon>
        <taxon>Metazoa</taxon>
        <taxon>Chordata</taxon>
        <taxon>Craniata</taxon>
        <taxon>Vertebrata</taxon>
        <taxon>Euteleostomi</taxon>
        <taxon>Amphibia</taxon>
        <taxon>Batrachia</taxon>
        <taxon>Anura</taxon>
        <taxon>Pipoidea</taxon>
        <taxon>Pipidae</taxon>
        <taxon>Xenopodinae</taxon>
        <taxon>Xenopus</taxon>
        <taxon>Xenopus</taxon>
    </lineage>
</organism>
<accession>Q2NL57</accession>
<keyword id="KW-0072">Autophagy</keyword>
<keyword id="KW-0963">Cytoplasm</keyword>
<keyword id="KW-0227">DNA damage</keyword>
<keyword id="KW-0234">DNA repair</keyword>
<keyword id="KW-0378">Hydrolase</keyword>
<keyword id="KW-0539">Nucleus</keyword>
<keyword id="KW-0645">Protease</keyword>
<keyword id="KW-1185">Reference proteome</keyword>
<keyword id="KW-0788">Thiol protease</keyword>
<keyword id="KW-0833">Ubl conjugation pathway</keyword>
<reference key="1">
    <citation type="submission" date="2005-12" db="EMBL/GenBank/DDBJ databases">
        <authorList>
            <consortium name="NIH - Xenopus Gene Collection (XGC) project"/>
        </authorList>
    </citation>
    <scope>NUCLEOTIDE SEQUENCE [LARGE SCALE MRNA]</scope>
    <source>
        <tissue>Eye</tissue>
    </source>
</reference>
<name>UB10A_XENLA</name>
<comment type="function">
    <text evidence="1">Hydrolase that can remove conjugated ubiquitin from target proteins such as p53/tp53, rps2/us5, rps3/us3, rps10/eS10, becn1, snx3 and cftr. Acts as an essential regulator of p53/tp53 stability: in unstressed cells, specifically deubiquitinates p53/tp53 in the cytoplasm, leading to counteracts MDM2 action and stabilize p53/tp53. Following DNA damage, translocates to the nucleus and deubiquitinates p53/tp53, leading to regulate the p53/TP53-dependent DNA damage response. Component of a regulatory loop that controls autophagy and p53/tp53 levels. Plays a key role in 40S ribosome subunit recycling when a ribosome has stalled during translation: acts both by inhibiting formation of stress granules, which store stalled translation pre-initiation complexes, and mediating deubiquitination of 40S ribosome subunits. Deubiquitinates cftr in early endosomes, enhancing its endocytic recycling.</text>
</comment>
<comment type="catalytic activity">
    <reaction evidence="1">
        <text>Thiol-dependent hydrolysis of ester, thioester, amide, peptide and isopeptide bonds formed by the C-terminal Gly of ubiquitin (a 76-residue protein attached to proteins as an intracellular targeting signal).</text>
        <dbReference type="EC" id="3.4.19.12"/>
    </reaction>
</comment>
<comment type="subcellular location">
    <subcellularLocation>
        <location evidence="1">Cytoplasm</location>
    </subcellularLocation>
    <subcellularLocation>
        <location evidence="1">Nucleus</location>
    </subcellularLocation>
</comment>
<comment type="similarity">
    <text evidence="5">Belongs to the peptidase C19 family. USP10 subfamily.</text>
</comment>
<protein>
    <recommendedName>
        <fullName>Ubiquitin carboxyl-terminal hydrolase 10-A</fullName>
        <ecNumber evidence="1">3.4.19.12</ecNumber>
    </recommendedName>
    <alternativeName>
        <fullName>Deubiquitinating enzyme 10-A</fullName>
    </alternativeName>
    <alternativeName>
        <fullName>Ubiquitin thioesterase 10-A</fullName>
    </alternativeName>
    <alternativeName>
        <fullName>Ubiquitin-specific-processing protease 10-A</fullName>
    </alternativeName>
</protein>
<evidence type="ECO:0000250" key="1">
    <source>
        <dbReference type="UniProtKB" id="Q14694"/>
    </source>
</evidence>
<evidence type="ECO:0000255" key="2">
    <source>
        <dbReference type="PROSITE-ProRule" id="PRU10092"/>
    </source>
</evidence>
<evidence type="ECO:0000255" key="3">
    <source>
        <dbReference type="PROSITE-ProRule" id="PRU10093"/>
    </source>
</evidence>
<evidence type="ECO:0000256" key="4">
    <source>
        <dbReference type="SAM" id="MobiDB-lite"/>
    </source>
</evidence>
<evidence type="ECO:0000305" key="5"/>
<proteinExistence type="evidence at transcript level"/>
<dbReference type="EC" id="3.4.19.12" evidence="1"/>
<dbReference type="EMBL" id="BC110953">
    <property type="protein sequence ID" value="AAI10954.1"/>
    <property type="molecule type" value="mRNA"/>
</dbReference>
<dbReference type="RefSeq" id="NP_001090293.1">
    <property type="nucleotide sequence ID" value="NM_001096824.1"/>
</dbReference>
<dbReference type="SMR" id="Q2NL57"/>
<dbReference type="BioGRID" id="607909">
    <property type="interactions" value="2"/>
</dbReference>
<dbReference type="MEROPS" id="C19.018"/>
<dbReference type="DNASU" id="779202"/>
<dbReference type="GeneID" id="779202"/>
<dbReference type="KEGG" id="xla:779202"/>
<dbReference type="AGR" id="Xenbase:XB-GENE-966190"/>
<dbReference type="CTD" id="779202"/>
<dbReference type="Xenbase" id="XB-GENE-966190">
    <property type="gene designation" value="usp10.S"/>
</dbReference>
<dbReference type="OMA" id="RTCGSPQ"/>
<dbReference type="OrthoDB" id="429671at2759"/>
<dbReference type="Proteomes" id="UP000186698">
    <property type="component" value="Chromosome 4S"/>
</dbReference>
<dbReference type="Bgee" id="779202">
    <property type="expression patterns" value="Expressed in gastrula and 19 other cell types or tissues"/>
</dbReference>
<dbReference type="GO" id="GO:0005737">
    <property type="term" value="C:cytoplasm"/>
    <property type="evidence" value="ECO:0000250"/>
    <property type="project" value="UniProtKB"/>
</dbReference>
<dbReference type="GO" id="GO:0005829">
    <property type="term" value="C:cytosol"/>
    <property type="evidence" value="ECO:0000318"/>
    <property type="project" value="GO_Central"/>
</dbReference>
<dbReference type="GO" id="GO:0005769">
    <property type="term" value="C:early endosome"/>
    <property type="evidence" value="ECO:0000250"/>
    <property type="project" value="UniProtKB"/>
</dbReference>
<dbReference type="GO" id="GO:0005634">
    <property type="term" value="C:nucleus"/>
    <property type="evidence" value="ECO:0000250"/>
    <property type="project" value="UniProtKB"/>
</dbReference>
<dbReference type="GO" id="GO:0004843">
    <property type="term" value="F:cysteine-type deubiquitinase activity"/>
    <property type="evidence" value="ECO:0000250"/>
    <property type="project" value="UniProtKB"/>
</dbReference>
<dbReference type="GO" id="GO:0004197">
    <property type="term" value="F:cysteine-type endopeptidase activity"/>
    <property type="evidence" value="ECO:0000250"/>
    <property type="project" value="UniProtKB"/>
</dbReference>
<dbReference type="GO" id="GO:0002039">
    <property type="term" value="F:p53 binding"/>
    <property type="evidence" value="ECO:0000250"/>
    <property type="project" value="UniProtKB"/>
</dbReference>
<dbReference type="GO" id="GO:0044325">
    <property type="term" value="F:transmembrane transporter binding"/>
    <property type="evidence" value="ECO:0000250"/>
    <property type="project" value="UniProtKB"/>
</dbReference>
<dbReference type="GO" id="GO:0006914">
    <property type="term" value="P:autophagy"/>
    <property type="evidence" value="ECO:0007669"/>
    <property type="project" value="UniProtKB-KW"/>
</dbReference>
<dbReference type="GO" id="GO:0071347">
    <property type="term" value="P:cellular response to interleukin-1"/>
    <property type="evidence" value="ECO:0000250"/>
    <property type="project" value="UniProtKB"/>
</dbReference>
<dbReference type="GO" id="GO:0006974">
    <property type="term" value="P:DNA damage response"/>
    <property type="evidence" value="ECO:0000250"/>
    <property type="project" value="UniProtKB"/>
</dbReference>
<dbReference type="GO" id="GO:0030330">
    <property type="term" value="P:DNA damage response, signal transduction by p53 class mediator"/>
    <property type="evidence" value="ECO:0000250"/>
    <property type="project" value="UniProtKB"/>
</dbReference>
<dbReference type="GO" id="GO:0006281">
    <property type="term" value="P:DNA repair"/>
    <property type="evidence" value="ECO:0007669"/>
    <property type="project" value="UniProtKB-KW"/>
</dbReference>
<dbReference type="GO" id="GO:0043124">
    <property type="term" value="P:negative regulation of canonical NF-kappaB signal transduction"/>
    <property type="evidence" value="ECO:0000250"/>
    <property type="project" value="UniProtKB"/>
</dbReference>
<dbReference type="GO" id="GO:0062030">
    <property type="term" value="P:negative regulation of stress granule assembly"/>
    <property type="evidence" value="ECO:0000250"/>
    <property type="project" value="UniProtKB"/>
</dbReference>
<dbReference type="GO" id="GO:0016579">
    <property type="term" value="P:protein deubiquitination"/>
    <property type="evidence" value="ECO:0000250"/>
    <property type="project" value="UniProtKB"/>
</dbReference>
<dbReference type="GO" id="GO:0006508">
    <property type="term" value="P:proteolysis"/>
    <property type="evidence" value="ECO:0007669"/>
    <property type="project" value="UniProtKB-KW"/>
</dbReference>
<dbReference type="GO" id="GO:0010506">
    <property type="term" value="P:regulation of autophagy"/>
    <property type="evidence" value="ECO:0000250"/>
    <property type="project" value="UniProtKB"/>
</dbReference>
<dbReference type="GO" id="GO:0031647">
    <property type="term" value="P:regulation of protein stability"/>
    <property type="evidence" value="ECO:0000318"/>
    <property type="project" value="GO_Central"/>
</dbReference>
<dbReference type="GO" id="GO:0072344">
    <property type="term" value="P:rescue of stalled ribosome"/>
    <property type="evidence" value="ECO:0000250"/>
    <property type="project" value="UniProtKB"/>
</dbReference>
<dbReference type="CDD" id="cd02257">
    <property type="entry name" value="Peptidase_C19"/>
    <property type="match status" value="1"/>
</dbReference>
<dbReference type="FunFam" id="3.90.70.10:FF:000015">
    <property type="entry name" value="Ubiquitin specific peptidase 10"/>
    <property type="match status" value="1"/>
</dbReference>
<dbReference type="Gene3D" id="3.90.70.10">
    <property type="entry name" value="Cysteine proteinases"/>
    <property type="match status" value="1"/>
</dbReference>
<dbReference type="InterPro" id="IPR038765">
    <property type="entry name" value="Papain-like_cys_pep_sf"/>
</dbReference>
<dbReference type="InterPro" id="IPR050164">
    <property type="entry name" value="Peptidase_C19"/>
</dbReference>
<dbReference type="InterPro" id="IPR001394">
    <property type="entry name" value="Peptidase_C19_UCH"/>
</dbReference>
<dbReference type="InterPro" id="IPR018200">
    <property type="entry name" value="USP_CS"/>
</dbReference>
<dbReference type="InterPro" id="IPR028889">
    <property type="entry name" value="USP_dom"/>
</dbReference>
<dbReference type="PANTHER" id="PTHR24006">
    <property type="entry name" value="UBIQUITIN CARBOXYL-TERMINAL HYDROLASE"/>
    <property type="match status" value="1"/>
</dbReference>
<dbReference type="PANTHER" id="PTHR24006:SF687">
    <property type="entry name" value="UBIQUITIN CARBOXYL-TERMINAL HYDROLASE 10"/>
    <property type="match status" value="1"/>
</dbReference>
<dbReference type="Pfam" id="PF00443">
    <property type="entry name" value="UCH"/>
    <property type="match status" value="1"/>
</dbReference>
<dbReference type="SUPFAM" id="SSF54001">
    <property type="entry name" value="Cysteine proteinases"/>
    <property type="match status" value="1"/>
</dbReference>
<dbReference type="PROSITE" id="PS00972">
    <property type="entry name" value="USP_1"/>
    <property type="match status" value="1"/>
</dbReference>
<dbReference type="PROSITE" id="PS00973">
    <property type="entry name" value="USP_2"/>
    <property type="match status" value="1"/>
</dbReference>
<dbReference type="PROSITE" id="PS50235">
    <property type="entry name" value="USP_3"/>
    <property type="match status" value="1"/>
</dbReference>
<feature type="chain" id="PRO_0000393002" description="Ubiquitin carboxyl-terminal hydrolase 10-A">
    <location>
        <begin position="1"/>
        <end position="791"/>
    </location>
</feature>
<feature type="domain" description="USP">
    <location>
        <begin position="408"/>
        <end position="788"/>
    </location>
</feature>
<feature type="region of interest" description="Disordered" evidence="4">
    <location>
        <begin position="118"/>
        <end position="156"/>
    </location>
</feature>
<feature type="region of interest" description="Disordered" evidence="4">
    <location>
        <begin position="270"/>
        <end position="291"/>
    </location>
</feature>
<feature type="region of interest" description="Disordered" evidence="4">
    <location>
        <begin position="560"/>
        <end position="580"/>
    </location>
</feature>
<feature type="compositionally biased region" description="Polar residues" evidence="4">
    <location>
        <begin position="118"/>
        <end position="139"/>
    </location>
</feature>
<feature type="compositionally biased region" description="Polar residues" evidence="4">
    <location>
        <begin position="270"/>
        <end position="284"/>
    </location>
</feature>
<feature type="active site" description="Nucleophile" evidence="2 3">
    <location>
        <position position="417"/>
    </location>
</feature>
<feature type="active site" description="Proton acceptor" evidence="2 3">
    <location>
        <position position="742"/>
    </location>
</feature>
<sequence length="791" mass="87563">MASPSEQYIFGEFSDDEFKQFFVTARCTVELPPYNEHFFPCGPQSSGDFQDGEECPRIEFGIEEVIDHNTTLPNNTDYSISSNLNPQAPEFILTCSSSPKDSNNVLHENNFDAIDCQFSESSIPDGSGNADSDGTSGTGQRERKKKKKRPPGYYSYLEGVGDVPSETLLNGHANSAGLNSISTDDPDLAEDIPISTTSPRTCTSPDNFVDLNNEALSDDASMHNVLDNTRTAGQPEECSVTSSEQSCIPSDNGRESPVRTAVVQPFAGTDTTENLGVTNGQTLESPEEDTASNGVVLHPEVISLSEEAKAEEISTAQAVIHLPGSASANAPAKSWASLFHNSKPSSTPQVAYVETKNTPPVTSLQVTEKQVEIKEGPVPVSEDPVAIKIAELLEEVKLVHKPVSLQPRGLINKGNWCYINATLQALVACPPMYHLMKSIPVYTKAQKPCTSTPMIDSFVRLMNEFTNMPILPKAKQAPGEKVVRDIRPGAPFEPAYIYRLLTVFKSSLSEKGRQEDAEEYLGFILNGLHEEMLALKKLLLPQNDKIHINNGPDPVFATEEVNKEEQEGSDEEWEQVGPRNKSSVTRQADFVQTPITDIFGGHMRSVVYQQSSKESATLQPFFTLQLDIQSEKIRTVQDALESLVARESVQGYTTKTKQEVEICRRVTLEELPPVLVLHLKRFVFEKTGGCQKLIKNIEYPVDLEISKDLLSPGVKSKIFKGQRTYRLFAVVYHHGNSATGGHYTTDVFQIGLNGWLRIDDQTVKVINQYQVVKQTVERTAYLLYYRRVDLL</sequence>
<gene>
    <name type="primary">usp10-a</name>
</gene>